<keyword id="KW-0472">Membrane</keyword>
<keyword id="KW-0496">Mitochondrion</keyword>
<keyword id="KW-0809">Transit peptide</keyword>
<keyword id="KW-0812">Transmembrane</keyword>
<keyword id="KW-1133">Transmembrane helix</keyword>
<comment type="subcellular location">
    <subcellularLocation>
        <location evidence="1">Mitochondrion membrane</location>
        <topology evidence="1">Single-pass membrane protein</topology>
    </subcellularLocation>
</comment>
<comment type="similarity">
    <text evidence="4">Belongs to the AIM34 family.</text>
</comment>
<name>AIM34_YEAS8</name>
<dbReference type="EMBL" id="FN393082">
    <property type="protein sequence ID" value="CAY81825.1"/>
    <property type="molecule type" value="Genomic_DNA"/>
</dbReference>
<dbReference type="SMR" id="C8ZEK9"/>
<dbReference type="HOGENOM" id="CLU_119188_0_0_1"/>
<dbReference type="OrthoDB" id="22335at4893"/>
<dbReference type="Proteomes" id="UP000000286">
    <property type="component" value="Chromosome XIII, Scaffold EC1118_1M3"/>
</dbReference>
<dbReference type="GO" id="GO:0031966">
    <property type="term" value="C:mitochondrial membrane"/>
    <property type="evidence" value="ECO:0007669"/>
    <property type="project" value="UniProtKB-SubCell"/>
</dbReference>
<dbReference type="FunFam" id="1.10.720.30:FF:000034">
    <property type="entry name" value="Altered inheritance of mitochondria protein 34, mitochondrial"/>
    <property type="match status" value="1"/>
</dbReference>
<dbReference type="Gene3D" id="1.10.720.30">
    <property type="entry name" value="SAP domain"/>
    <property type="match status" value="1"/>
</dbReference>
<dbReference type="InterPro" id="IPR003034">
    <property type="entry name" value="SAP_dom"/>
</dbReference>
<dbReference type="InterPro" id="IPR036361">
    <property type="entry name" value="SAP_dom_sf"/>
</dbReference>
<dbReference type="Pfam" id="PF02037">
    <property type="entry name" value="SAP"/>
    <property type="match status" value="1"/>
</dbReference>
<dbReference type="SMART" id="SM00513">
    <property type="entry name" value="SAP"/>
    <property type="match status" value="1"/>
</dbReference>
<dbReference type="SUPFAM" id="SSF68906">
    <property type="entry name" value="SAP domain"/>
    <property type="match status" value="1"/>
</dbReference>
<dbReference type="PROSITE" id="PS50800">
    <property type="entry name" value="SAP"/>
    <property type="match status" value="1"/>
</dbReference>
<accession>C8ZEK9</accession>
<sequence>MSISLLGRIVSQQFSGIRAAGPGRSLYLPFTLLLKQPGAYKVTLHRYVHSTQTKSHLSFLMNNNDITPFQKFTVKVLKEQCKSRGLKLSGRKSDLLQRLITHDSCSNKKSSVKINEPKKKRILINDPIKITKKLVSDKTFRTIEKNISSLQNTPVIETPCDVHSHLQPRDRIFLLGFFMLSCLWWNLEPQESKPTIDH</sequence>
<gene>
    <name type="primary">AIM34</name>
    <name type="ORF">EC1118_1M3_1607g</name>
</gene>
<proteinExistence type="inferred from homology"/>
<reference key="1">
    <citation type="journal article" date="2009" name="Proc. Natl. Acad. Sci. U.S.A.">
        <title>Eukaryote-to-eukaryote gene transfer events revealed by the genome sequence of the wine yeast Saccharomyces cerevisiae EC1118.</title>
        <authorList>
            <person name="Novo M."/>
            <person name="Bigey F."/>
            <person name="Beyne E."/>
            <person name="Galeote V."/>
            <person name="Gavory F."/>
            <person name="Mallet S."/>
            <person name="Cambon B."/>
            <person name="Legras J.-L."/>
            <person name="Wincker P."/>
            <person name="Casaregola S."/>
            <person name="Dequin S."/>
        </authorList>
    </citation>
    <scope>NUCLEOTIDE SEQUENCE [LARGE SCALE GENOMIC DNA]</scope>
    <source>
        <strain>Lalvin EC1118 / Prise de mousse</strain>
    </source>
</reference>
<protein>
    <recommendedName>
        <fullName>Altered inheritance of mitochondria protein 34, mitochondrial</fullName>
    </recommendedName>
</protein>
<feature type="transit peptide" description="Mitochondrion" evidence="2">
    <location>
        <begin position="1"/>
        <end position="55"/>
    </location>
</feature>
<feature type="chain" id="PRO_0000399716" description="Altered inheritance of mitochondria protein 34, mitochondrial">
    <location>
        <begin position="56"/>
        <end position="198"/>
    </location>
</feature>
<feature type="transmembrane region" description="Helical" evidence="2">
    <location>
        <begin position="172"/>
        <end position="187"/>
    </location>
</feature>
<feature type="domain" description="SAP" evidence="3">
    <location>
        <begin position="69"/>
        <end position="103"/>
    </location>
</feature>
<organism>
    <name type="scientific">Saccharomyces cerevisiae (strain Lalvin EC1118 / Prise de mousse)</name>
    <name type="common">Baker's yeast</name>
    <dbReference type="NCBI Taxonomy" id="643680"/>
    <lineage>
        <taxon>Eukaryota</taxon>
        <taxon>Fungi</taxon>
        <taxon>Dikarya</taxon>
        <taxon>Ascomycota</taxon>
        <taxon>Saccharomycotina</taxon>
        <taxon>Saccharomycetes</taxon>
        <taxon>Saccharomycetales</taxon>
        <taxon>Saccharomycetaceae</taxon>
        <taxon>Saccharomyces</taxon>
    </lineage>
</organism>
<evidence type="ECO:0000250" key="1"/>
<evidence type="ECO:0000255" key="2"/>
<evidence type="ECO:0000255" key="3">
    <source>
        <dbReference type="PROSITE-ProRule" id="PRU00186"/>
    </source>
</evidence>
<evidence type="ECO:0000305" key="4"/>